<sequence>MNGVYHIMNNEYPYSADEVLHKAKSYLSADEYEYVLKSYHIAYEAHKGQFRKNGLPYIMHPIQVAGILTEMRLDGPTIVAGFLHDVIEDTPYTFEDVKEMFNEEVARIVDGVTKLKKVKYRSKEEQQAENHRKLFIAIAKDVRVILVKLADRLHNMRTLKAMPREKQIRISRETLEIYAPLAHHLGINTIKWELEDTALRYIDNVQYFRIVNLMKKKRSEREAYIETAIDRIRTEMDRMNIEGDINGRPKHIYSIYRKMMKQKKQFDQIFDLLAIRVIVNSINDCYAILGLVHTLWKPMPGRFKDYIAMPKQNLYQSLHTTVVGPNGDPLEIQIRTFDMHEIAEHGVAAHWAYKEGKKVSEKDQTYQNKLNWLKELAEADHTSSDAQEFMETLKYDLQSDKVYAFTPASDVIELPYGAVPIDFAYAIHSEVGNKMIGAKVNGKIVPIDYILQTGDIVEIRTSKHSYGPSRDWLKIVKSSSAKGKIKSFFKKQDRSSNIEKGRMMVEVEIKEQGFRVEDILTEKNIQVVNEKYNFANEDDLFAAVGFGGVTSLQIVNKLTERQRILDKQRALNEEQEVTKSLPIKDNIITDSGVYVEGLENVLIKLSKCCNPIPGDDIVGYITKGHGIKVHRTDCPNIKNETERLINVEWVKSKDATQKYQVDLEVTAYDRNGLLNEVLQAVSSTAGNLIKVSGRSDIDKNAIINISVMVKNVNDVYRVVEKIKQLGDVYTVTRVWN</sequence>
<evidence type="ECO:0000250" key="1"/>
<evidence type="ECO:0000255" key="2">
    <source>
        <dbReference type="PROSITE-ProRule" id="PRU01007"/>
    </source>
</evidence>
<evidence type="ECO:0000255" key="3">
    <source>
        <dbReference type="PROSITE-ProRule" id="PRU01175"/>
    </source>
</evidence>
<evidence type="ECO:0000255" key="4">
    <source>
        <dbReference type="PROSITE-ProRule" id="PRU01228"/>
    </source>
</evidence>
<evidence type="ECO:0000305" key="5"/>
<evidence type="ECO:0007829" key="6">
    <source>
        <dbReference type="PDB" id="7OIW"/>
    </source>
</evidence>
<keyword id="KW-0002">3D-structure</keyword>
<keyword id="KW-0067">ATP-binding</keyword>
<keyword id="KW-0342">GTP-binding</keyword>
<keyword id="KW-0418">Kinase</keyword>
<keyword id="KW-0547">Nucleotide-binding</keyword>
<keyword id="KW-0808">Transferase</keyword>
<feature type="chain" id="PRO_0000166555" description="GTP pyrophosphokinase">
    <location>
        <begin position="1"/>
        <end position="736"/>
    </location>
</feature>
<feature type="domain" description="HD" evidence="3">
    <location>
        <begin position="57"/>
        <end position="156"/>
    </location>
</feature>
<feature type="domain" description="TGS" evidence="4">
    <location>
        <begin position="400"/>
        <end position="461"/>
    </location>
</feature>
<feature type="domain" description="ACT" evidence="2">
    <location>
        <begin position="662"/>
        <end position="736"/>
    </location>
</feature>
<feature type="helix" evidence="6">
    <location>
        <begin position="16"/>
        <end position="24"/>
    </location>
</feature>
<feature type="helix" evidence="6">
    <location>
        <begin position="29"/>
        <end position="45"/>
    </location>
</feature>
<feature type="turn" evidence="6">
    <location>
        <begin position="46"/>
        <end position="48"/>
    </location>
</feature>
<feature type="strand" evidence="6">
    <location>
        <begin position="52"/>
        <end position="56"/>
    </location>
</feature>
<feature type="helix" evidence="6">
    <location>
        <begin position="59"/>
        <end position="70"/>
    </location>
</feature>
<feature type="helix" evidence="6">
    <location>
        <begin position="75"/>
        <end position="83"/>
    </location>
</feature>
<feature type="helix" evidence="6">
    <location>
        <begin position="86"/>
        <end position="89"/>
    </location>
</feature>
<feature type="helix" evidence="6">
    <location>
        <begin position="94"/>
        <end position="100"/>
    </location>
</feature>
<feature type="helix" evidence="6">
    <location>
        <begin position="103"/>
        <end position="114"/>
    </location>
</feature>
<feature type="helix" evidence="6">
    <location>
        <begin position="132"/>
        <end position="140"/>
    </location>
</feature>
<feature type="helix" evidence="6">
    <location>
        <begin position="142"/>
        <end position="157"/>
    </location>
</feature>
<feature type="helix" evidence="6">
    <location>
        <begin position="164"/>
        <end position="176"/>
    </location>
</feature>
<feature type="helix" evidence="6">
    <location>
        <begin position="178"/>
        <end position="184"/>
    </location>
</feature>
<feature type="helix" evidence="6">
    <location>
        <begin position="188"/>
        <end position="202"/>
    </location>
</feature>
<feature type="helix" evidence="6">
    <location>
        <begin position="204"/>
        <end position="239"/>
    </location>
</feature>
<feature type="strand" evidence="6">
    <location>
        <begin position="243"/>
        <end position="249"/>
    </location>
</feature>
<feature type="helix" evidence="6">
    <location>
        <begin position="252"/>
        <end position="260"/>
    </location>
</feature>
<feature type="strand" evidence="6">
    <location>
        <begin position="272"/>
        <end position="281"/>
    </location>
</feature>
<feature type="helix" evidence="6">
    <location>
        <begin position="282"/>
        <end position="295"/>
    </location>
</feature>
<feature type="strand" evidence="6">
    <location>
        <begin position="296"/>
        <end position="298"/>
    </location>
</feature>
<feature type="turn" evidence="6">
    <location>
        <begin position="306"/>
        <end position="308"/>
    </location>
</feature>
<feature type="strand" evidence="6">
    <location>
        <begin position="318"/>
        <end position="323"/>
    </location>
</feature>
<feature type="helix" evidence="6">
    <location>
        <begin position="325"/>
        <end position="327"/>
    </location>
</feature>
<feature type="strand" evidence="6">
    <location>
        <begin position="329"/>
        <end position="336"/>
    </location>
</feature>
<feature type="helix" evidence="6">
    <location>
        <begin position="337"/>
        <end position="345"/>
    </location>
</feature>
<feature type="helix" evidence="6">
    <location>
        <begin position="346"/>
        <end position="350"/>
    </location>
</feature>
<name>RELA_STAAM</name>
<gene>
    <name type="primary">relA</name>
    <name type="ordered locus">SAV1634</name>
</gene>
<accession>Q931Q4</accession>
<dbReference type="EC" id="2.7.6.5"/>
<dbReference type="EMBL" id="BA000017">
    <property type="protein sequence ID" value="BAB57796.1"/>
    <property type="status" value="ALT_INIT"/>
    <property type="molecule type" value="Genomic_DNA"/>
</dbReference>
<dbReference type="RefSeq" id="WP_001058580.1">
    <property type="nucleotide sequence ID" value="NC_002758.2"/>
</dbReference>
<dbReference type="PDB" id="7OIW">
    <property type="method" value="X-ray"/>
    <property type="resolution" value="2.63 A"/>
    <property type="chains" value="A/B=1-438"/>
</dbReference>
<dbReference type="PDBsum" id="7OIW"/>
<dbReference type="SMR" id="Q931Q4"/>
<dbReference type="KEGG" id="sav:SAV1634"/>
<dbReference type="HOGENOM" id="CLU_012300_3_0_9"/>
<dbReference type="UniPathway" id="UPA00908">
    <property type="reaction ID" value="UER00884"/>
</dbReference>
<dbReference type="Proteomes" id="UP000002481">
    <property type="component" value="Chromosome"/>
</dbReference>
<dbReference type="GO" id="GO:0005886">
    <property type="term" value="C:plasma membrane"/>
    <property type="evidence" value="ECO:0007669"/>
    <property type="project" value="TreeGrafter"/>
</dbReference>
<dbReference type="GO" id="GO:0005524">
    <property type="term" value="F:ATP binding"/>
    <property type="evidence" value="ECO:0007669"/>
    <property type="project" value="UniProtKB-KW"/>
</dbReference>
<dbReference type="GO" id="GO:0005525">
    <property type="term" value="F:GTP binding"/>
    <property type="evidence" value="ECO:0007669"/>
    <property type="project" value="UniProtKB-KW"/>
</dbReference>
<dbReference type="GO" id="GO:0008728">
    <property type="term" value="F:GTP diphosphokinase activity"/>
    <property type="evidence" value="ECO:0007669"/>
    <property type="project" value="UniProtKB-EC"/>
</dbReference>
<dbReference type="GO" id="GO:0016301">
    <property type="term" value="F:kinase activity"/>
    <property type="evidence" value="ECO:0007669"/>
    <property type="project" value="UniProtKB-KW"/>
</dbReference>
<dbReference type="GO" id="GO:0015970">
    <property type="term" value="P:guanosine tetraphosphate biosynthetic process"/>
    <property type="evidence" value="ECO:0007669"/>
    <property type="project" value="UniProtKB-UniPathway"/>
</dbReference>
<dbReference type="CDD" id="cd04876">
    <property type="entry name" value="ACT_RelA-SpoT"/>
    <property type="match status" value="1"/>
</dbReference>
<dbReference type="CDD" id="cd00077">
    <property type="entry name" value="HDc"/>
    <property type="match status" value="1"/>
</dbReference>
<dbReference type="CDD" id="cd05399">
    <property type="entry name" value="NT_Rel-Spo_like"/>
    <property type="match status" value="1"/>
</dbReference>
<dbReference type="CDD" id="cd01668">
    <property type="entry name" value="TGS_RSH"/>
    <property type="match status" value="1"/>
</dbReference>
<dbReference type="FunFam" id="3.10.20.30:FF:000002">
    <property type="entry name" value="GTP pyrophosphokinase (RelA/SpoT)"/>
    <property type="match status" value="1"/>
</dbReference>
<dbReference type="FunFam" id="1.10.3210.10:FF:000001">
    <property type="entry name" value="GTP pyrophosphokinase RelA"/>
    <property type="match status" value="1"/>
</dbReference>
<dbReference type="FunFam" id="3.30.460.10:FF:000001">
    <property type="entry name" value="GTP pyrophosphokinase RelA"/>
    <property type="match status" value="1"/>
</dbReference>
<dbReference type="Gene3D" id="3.10.20.30">
    <property type="match status" value="1"/>
</dbReference>
<dbReference type="Gene3D" id="3.30.70.260">
    <property type="match status" value="1"/>
</dbReference>
<dbReference type="Gene3D" id="3.30.460.10">
    <property type="entry name" value="Beta Polymerase, domain 2"/>
    <property type="match status" value="1"/>
</dbReference>
<dbReference type="Gene3D" id="1.10.3210.10">
    <property type="entry name" value="Hypothetical protein af1432"/>
    <property type="match status" value="1"/>
</dbReference>
<dbReference type="InterPro" id="IPR045865">
    <property type="entry name" value="ACT-like_dom_sf"/>
</dbReference>
<dbReference type="InterPro" id="IPR002912">
    <property type="entry name" value="ACT_dom"/>
</dbReference>
<dbReference type="InterPro" id="IPR012675">
    <property type="entry name" value="Beta-grasp_dom_sf"/>
</dbReference>
<dbReference type="InterPro" id="IPR003607">
    <property type="entry name" value="HD/PDEase_dom"/>
</dbReference>
<dbReference type="InterPro" id="IPR006674">
    <property type="entry name" value="HD_domain"/>
</dbReference>
<dbReference type="InterPro" id="IPR043519">
    <property type="entry name" value="NT_sf"/>
</dbReference>
<dbReference type="InterPro" id="IPR004811">
    <property type="entry name" value="RelA/Spo_fam"/>
</dbReference>
<dbReference type="InterPro" id="IPR045600">
    <property type="entry name" value="RelA/SpoT_AH_RIS"/>
</dbReference>
<dbReference type="InterPro" id="IPR007685">
    <property type="entry name" value="RelA_SpoT"/>
</dbReference>
<dbReference type="InterPro" id="IPR004095">
    <property type="entry name" value="TGS"/>
</dbReference>
<dbReference type="InterPro" id="IPR012676">
    <property type="entry name" value="TGS-like"/>
</dbReference>
<dbReference type="InterPro" id="IPR033655">
    <property type="entry name" value="TGS_RelA/SpoT"/>
</dbReference>
<dbReference type="NCBIfam" id="TIGR00691">
    <property type="entry name" value="spoT_relA"/>
    <property type="match status" value="1"/>
</dbReference>
<dbReference type="PANTHER" id="PTHR21262:SF31">
    <property type="entry name" value="GTP PYROPHOSPHOKINASE"/>
    <property type="match status" value="1"/>
</dbReference>
<dbReference type="PANTHER" id="PTHR21262">
    <property type="entry name" value="GUANOSINE-3',5'-BIS DIPHOSPHATE 3'-PYROPHOSPHOHYDROLASE"/>
    <property type="match status" value="1"/>
</dbReference>
<dbReference type="Pfam" id="PF13291">
    <property type="entry name" value="ACT_4"/>
    <property type="match status" value="1"/>
</dbReference>
<dbReference type="Pfam" id="PF13328">
    <property type="entry name" value="HD_4"/>
    <property type="match status" value="1"/>
</dbReference>
<dbReference type="Pfam" id="PF19296">
    <property type="entry name" value="RelA_AH_RIS"/>
    <property type="match status" value="1"/>
</dbReference>
<dbReference type="Pfam" id="PF04607">
    <property type="entry name" value="RelA_SpoT"/>
    <property type="match status" value="1"/>
</dbReference>
<dbReference type="Pfam" id="PF02824">
    <property type="entry name" value="TGS"/>
    <property type="match status" value="1"/>
</dbReference>
<dbReference type="SMART" id="SM00471">
    <property type="entry name" value="HDc"/>
    <property type="match status" value="1"/>
</dbReference>
<dbReference type="SMART" id="SM00954">
    <property type="entry name" value="RelA_SpoT"/>
    <property type="match status" value="1"/>
</dbReference>
<dbReference type="SUPFAM" id="SSF55021">
    <property type="entry name" value="ACT-like"/>
    <property type="match status" value="1"/>
</dbReference>
<dbReference type="SUPFAM" id="SSF109604">
    <property type="entry name" value="HD-domain/PDEase-like"/>
    <property type="match status" value="1"/>
</dbReference>
<dbReference type="SUPFAM" id="SSF81301">
    <property type="entry name" value="Nucleotidyltransferase"/>
    <property type="match status" value="1"/>
</dbReference>
<dbReference type="SUPFAM" id="SSF81271">
    <property type="entry name" value="TGS-like"/>
    <property type="match status" value="1"/>
</dbReference>
<dbReference type="PROSITE" id="PS51671">
    <property type="entry name" value="ACT"/>
    <property type="match status" value="1"/>
</dbReference>
<dbReference type="PROSITE" id="PS51831">
    <property type="entry name" value="HD"/>
    <property type="match status" value="1"/>
</dbReference>
<dbReference type="PROSITE" id="PS51880">
    <property type="entry name" value="TGS"/>
    <property type="match status" value="1"/>
</dbReference>
<proteinExistence type="evidence at protein level"/>
<organism>
    <name type="scientific">Staphylococcus aureus (strain Mu50 / ATCC 700699)</name>
    <dbReference type="NCBI Taxonomy" id="158878"/>
    <lineage>
        <taxon>Bacteria</taxon>
        <taxon>Bacillati</taxon>
        <taxon>Bacillota</taxon>
        <taxon>Bacilli</taxon>
        <taxon>Bacillales</taxon>
        <taxon>Staphylococcaceae</taxon>
        <taxon>Staphylococcus</taxon>
    </lineage>
</organism>
<comment type="function">
    <text evidence="1">In eubacteria ppGpp (guanosine 3'-diphosphate 5'-diphosphate) is a mediator of the stringent response that coordinates a variety of cellular activities in response to changes in nutritional abundance. This enzyme catalyzes the formation of pppGpp which is then hydrolyzed to form ppGpp (By similarity).</text>
</comment>
<comment type="catalytic activity">
    <reaction>
        <text>GTP + ATP = guanosine 3'-diphosphate 5'-triphosphate + AMP</text>
        <dbReference type="Rhea" id="RHEA:22088"/>
        <dbReference type="ChEBI" id="CHEBI:30616"/>
        <dbReference type="ChEBI" id="CHEBI:37565"/>
        <dbReference type="ChEBI" id="CHEBI:142410"/>
        <dbReference type="ChEBI" id="CHEBI:456215"/>
        <dbReference type="EC" id="2.7.6.5"/>
    </reaction>
</comment>
<comment type="pathway">
    <text>Purine metabolism; ppGpp biosynthesis; ppGpp from GTP: step 1/2.</text>
</comment>
<comment type="similarity">
    <text evidence="5">Belongs to the RelA/SpoT family.</text>
</comment>
<comment type="sequence caution" evidence="5">
    <conflict type="erroneous initiation">
        <sequence resource="EMBL-CDS" id="BAB57796"/>
    </conflict>
</comment>
<reference key="1">
    <citation type="journal article" date="2001" name="Lancet">
        <title>Whole genome sequencing of meticillin-resistant Staphylococcus aureus.</title>
        <authorList>
            <person name="Kuroda M."/>
            <person name="Ohta T."/>
            <person name="Uchiyama I."/>
            <person name="Baba T."/>
            <person name="Yuzawa H."/>
            <person name="Kobayashi I."/>
            <person name="Cui L."/>
            <person name="Oguchi A."/>
            <person name="Aoki K."/>
            <person name="Nagai Y."/>
            <person name="Lian J.-Q."/>
            <person name="Ito T."/>
            <person name="Kanamori M."/>
            <person name="Matsumaru H."/>
            <person name="Maruyama A."/>
            <person name="Murakami H."/>
            <person name="Hosoyama A."/>
            <person name="Mizutani-Ui Y."/>
            <person name="Takahashi N.K."/>
            <person name="Sawano T."/>
            <person name="Inoue R."/>
            <person name="Kaito C."/>
            <person name="Sekimizu K."/>
            <person name="Hirakawa H."/>
            <person name="Kuhara S."/>
            <person name="Goto S."/>
            <person name="Yabuzaki J."/>
            <person name="Kanehisa M."/>
            <person name="Yamashita A."/>
            <person name="Oshima K."/>
            <person name="Furuya K."/>
            <person name="Yoshino C."/>
            <person name="Shiba T."/>
            <person name="Hattori M."/>
            <person name="Ogasawara N."/>
            <person name="Hayashi H."/>
            <person name="Hiramatsu K."/>
        </authorList>
    </citation>
    <scope>NUCLEOTIDE SEQUENCE [LARGE SCALE GENOMIC DNA]</scope>
    <source>
        <strain>Mu50 / ATCC 700699</strain>
    </source>
</reference>
<protein>
    <recommendedName>
        <fullName>GTP pyrophosphokinase</fullName>
        <ecNumber>2.7.6.5</ecNumber>
    </recommendedName>
    <alternativeName>
        <fullName>(p)ppGpp synthase</fullName>
    </alternativeName>
    <alternativeName>
        <fullName>ATP:GTP 3'-pyrophosphotransferase</fullName>
    </alternativeName>
    <alternativeName>
        <fullName>ppGpp synthase I</fullName>
    </alternativeName>
</protein>